<gene>
    <name evidence="1" type="primary">ispE</name>
    <name type="ordered locus">XOO3406</name>
</gene>
<name>ISPE_XANOM</name>
<comment type="function">
    <text evidence="1">Catalyzes the phosphorylation of the position 2 hydroxy group of 4-diphosphocytidyl-2C-methyl-D-erythritol.</text>
</comment>
<comment type="catalytic activity">
    <reaction evidence="1">
        <text>4-CDP-2-C-methyl-D-erythritol + ATP = 4-CDP-2-C-methyl-D-erythritol 2-phosphate + ADP + H(+)</text>
        <dbReference type="Rhea" id="RHEA:18437"/>
        <dbReference type="ChEBI" id="CHEBI:15378"/>
        <dbReference type="ChEBI" id="CHEBI:30616"/>
        <dbReference type="ChEBI" id="CHEBI:57823"/>
        <dbReference type="ChEBI" id="CHEBI:57919"/>
        <dbReference type="ChEBI" id="CHEBI:456216"/>
        <dbReference type="EC" id="2.7.1.148"/>
    </reaction>
</comment>
<comment type="pathway">
    <text evidence="1">Isoprenoid biosynthesis; isopentenyl diphosphate biosynthesis via DXP pathway; isopentenyl diphosphate from 1-deoxy-D-xylulose 5-phosphate: step 3/6.</text>
</comment>
<comment type="similarity">
    <text evidence="1">Belongs to the GHMP kinase family. IspE subfamily.</text>
</comment>
<comment type="sequence caution" evidence="2">
    <conflict type="erroneous initiation">
        <sequence resource="EMBL-CDS" id="BAE70161"/>
    </conflict>
</comment>
<organism>
    <name type="scientific">Xanthomonas oryzae pv. oryzae (strain MAFF 311018)</name>
    <dbReference type="NCBI Taxonomy" id="342109"/>
    <lineage>
        <taxon>Bacteria</taxon>
        <taxon>Pseudomonadati</taxon>
        <taxon>Pseudomonadota</taxon>
        <taxon>Gammaproteobacteria</taxon>
        <taxon>Lysobacterales</taxon>
        <taxon>Lysobacteraceae</taxon>
        <taxon>Xanthomonas</taxon>
    </lineage>
</organism>
<sequence>MDRIALMNAPGTDWSAWPAPAKLNLFLQITGRRADGYHLLQTVFRLLDWGDTIHLRVRSDGQILRIGESLPGVAEDDDLVIRAARLLQSAAGAAAGAEIRVDKRIPAGGGFGGGSSDAATVLVALNALWGLALTADTLAELGLQLGADVPVFVRGRNAWAEGVGEQLTPIALPEAAYLLVDPGVHVPTPVLFRSQELTRDAAPAKITDFASGSLLDNAFEPVLRRREPAVEAVFQALSRVGTPRLTGSGSGCFVEFATRAAAEQALAQLPGSLRAWVVEGAAHSPLLDARDAMKV</sequence>
<evidence type="ECO:0000255" key="1">
    <source>
        <dbReference type="HAMAP-Rule" id="MF_00061"/>
    </source>
</evidence>
<evidence type="ECO:0000305" key="2"/>
<keyword id="KW-0067">ATP-binding</keyword>
<keyword id="KW-0414">Isoprene biosynthesis</keyword>
<keyword id="KW-0418">Kinase</keyword>
<keyword id="KW-0547">Nucleotide-binding</keyword>
<keyword id="KW-0808">Transferase</keyword>
<protein>
    <recommendedName>
        <fullName evidence="1">4-diphosphocytidyl-2-C-methyl-D-erythritol kinase</fullName>
        <shortName evidence="1">CMK</shortName>
        <ecNumber evidence="1">2.7.1.148</ecNumber>
    </recommendedName>
    <alternativeName>
        <fullName evidence="1">4-(cytidine-5'-diphospho)-2-C-methyl-D-erythritol kinase</fullName>
    </alternativeName>
</protein>
<accession>Q2NZW6</accession>
<feature type="chain" id="PRO_0000235156" description="4-diphosphocytidyl-2-C-methyl-D-erythritol kinase">
    <location>
        <begin position="1"/>
        <end position="295"/>
    </location>
</feature>
<feature type="active site" evidence="1">
    <location>
        <position position="22"/>
    </location>
</feature>
<feature type="active site" evidence="1">
    <location>
        <position position="148"/>
    </location>
</feature>
<feature type="binding site" evidence="1">
    <location>
        <begin position="106"/>
        <end position="116"/>
    </location>
    <ligand>
        <name>ATP</name>
        <dbReference type="ChEBI" id="CHEBI:30616"/>
    </ligand>
</feature>
<proteinExistence type="inferred from homology"/>
<dbReference type="EC" id="2.7.1.148" evidence="1"/>
<dbReference type="EMBL" id="AP008229">
    <property type="protein sequence ID" value="BAE70161.1"/>
    <property type="status" value="ALT_INIT"/>
    <property type="molecule type" value="Genomic_DNA"/>
</dbReference>
<dbReference type="RefSeq" id="WP_011260045.1">
    <property type="nucleotide sequence ID" value="NC_007705.1"/>
</dbReference>
<dbReference type="SMR" id="Q2NZW6"/>
<dbReference type="KEGG" id="xom:XOO3406"/>
<dbReference type="HOGENOM" id="CLU_053057_3_0_6"/>
<dbReference type="UniPathway" id="UPA00056">
    <property type="reaction ID" value="UER00094"/>
</dbReference>
<dbReference type="GO" id="GO:0050515">
    <property type="term" value="F:4-(cytidine 5'-diphospho)-2-C-methyl-D-erythritol kinase activity"/>
    <property type="evidence" value="ECO:0007669"/>
    <property type="project" value="UniProtKB-UniRule"/>
</dbReference>
<dbReference type="GO" id="GO:0005524">
    <property type="term" value="F:ATP binding"/>
    <property type="evidence" value="ECO:0007669"/>
    <property type="project" value="UniProtKB-UniRule"/>
</dbReference>
<dbReference type="GO" id="GO:0019288">
    <property type="term" value="P:isopentenyl diphosphate biosynthetic process, methylerythritol 4-phosphate pathway"/>
    <property type="evidence" value="ECO:0007669"/>
    <property type="project" value="UniProtKB-UniRule"/>
</dbReference>
<dbReference type="GO" id="GO:0016114">
    <property type="term" value="P:terpenoid biosynthetic process"/>
    <property type="evidence" value="ECO:0007669"/>
    <property type="project" value="InterPro"/>
</dbReference>
<dbReference type="FunFam" id="3.30.70.890:FF:000014">
    <property type="entry name" value="4-diphosphocytidyl-2-C-methyl-D-erythritol kinase"/>
    <property type="match status" value="1"/>
</dbReference>
<dbReference type="Gene3D" id="3.30.230.10">
    <property type="match status" value="1"/>
</dbReference>
<dbReference type="Gene3D" id="3.30.70.890">
    <property type="entry name" value="GHMP kinase, C-terminal domain"/>
    <property type="match status" value="1"/>
</dbReference>
<dbReference type="HAMAP" id="MF_00061">
    <property type="entry name" value="IspE"/>
    <property type="match status" value="1"/>
</dbReference>
<dbReference type="InterPro" id="IPR013750">
    <property type="entry name" value="GHMP_kinase_C_dom"/>
</dbReference>
<dbReference type="InterPro" id="IPR036554">
    <property type="entry name" value="GHMP_kinase_C_sf"/>
</dbReference>
<dbReference type="InterPro" id="IPR006204">
    <property type="entry name" value="GHMP_kinase_N_dom"/>
</dbReference>
<dbReference type="InterPro" id="IPR004424">
    <property type="entry name" value="IspE"/>
</dbReference>
<dbReference type="InterPro" id="IPR020568">
    <property type="entry name" value="Ribosomal_Su5_D2-typ_SF"/>
</dbReference>
<dbReference type="InterPro" id="IPR014721">
    <property type="entry name" value="Ribsml_uS5_D2-typ_fold_subgr"/>
</dbReference>
<dbReference type="NCBIfam" id="TIGR00154">
    <property type="entry name" value="ispE"/>
    <property type="match status" value="1"/>
</dbReference>
<dbReference type="PANTHER" id="PTHR43527">
    <property type="entry name" value="4-DIPHOSPHOCYTIDYL-2-C-METHYL-D-ERYTHRITOL KINASE, CHLOROPLASTIC"/>
    <property type="match status" value="1"/>
</dbReference>
<dbReference type="PANTHER" id="PTHR43527:SF2">
    <property type="entry name" value="4-DIPHOSPHOCYTIDYL-2-C-METHYL-D-ERYTHRITOL KINASE, CHLOROPLASTIC"/>
    <property type="match status" value="1"/>
</dbReference>
<dbReference type="Pfam" id="PF08544">
    <property type="entry name" value="GHMP_kinases_C"/>
    <property type="match status" value="1"/>
</dbReference>
<dbReference type="Pfam" id="PF00288">
    <property type="entry name" value="GHMP_kinases_N"/>
    <property type="match status" value="1"/>
</dbReference>
<dbReference type="PIRSF" id="PIRSF010376">
    <property type="entry name" value="IspE"/>
    <property type="match status" value="1"/>
</dbReference>
<dbReference type="SUPFAM" id="SSF55060">
    <property type="entry name" value="GHMP Kinase, C-terminal domain"/>
    <property type="match status" value="1"/>
</dbReference>
<dbReference type="SUPFAM" id="SSF54211">
    <property type="entry name" value="Ribosomal protein S5 domain 2-like"/>
    <property type="match status" value="1"/>
</dbReference>
<reference key="1">
    <citation type="journal article" date="2005" name="Jpn. Agric. Res. Q.">
        <title>Genome sequence of Xanthomonas oryzae pv. oryzae suggests contribution of large numbers of effector genes and insertion sequences to its race diversity.</title>
        <authorList>
            <person name="Ochiai H."/>
            <person name="Inoue Y."/>
            <person name="Takeya M."/>
            <person name="Sasaki A."/>
            <person name="Kaku H."/>
        </authorList>
    </citation>
    <scope>NUCLEOTIDE SEQUENCE [LARGE SCALE GENOMIC DNA]</scope>
    <source>
        <strain>MAFF 311018</strain>
    </source>
</reference>